<comment type="function">
    <text evidence="1">Methylates large ribosomal subunit protein uL3 on a specific glutamine residue.</text>
</comment>
<comment type="catalytic activity">
    <reaction evidence="1">
        <text>L-glutaminyl-[ribosomal protein uL3] + S-adenosyl-L-methionine = N(5)-methyl-L-glutaminyl-[ribosomal protein uL3] + S-adenosyl-L-homocysteine + H(+)</text>
        <dbReference type="Rhea" id="RHEA:45020"/>
        <dbReference type="Rhea" id="RHEA-COMP:11063"/>
        <dbReference type="Rhea" id="RHEA-COMP:11064"/>
        <dbReference type="ChEBI" id="CHEBI:15378"/>
        <dbReference type="ChEBI" id="CHEBI:30011"/>
        <dbReference type="ChEBI" id="CHEBI:57856"/>
        <dbReference type="ChEBI" id="CHEBI:59789"/>
        <dbReference type="ChEBI" id="CHEBI:61891"/>
        <dbReference type="EC" id="2.1.1.298"/>
    </reaction>
</comment>
<comment type="similarity">
    <text evidence="1">Belongs to the protein N5-glutamine methyltransferase family. PrmB subfamily.</text>
</comment>
<protein>
    <recommendedName>
        <fullName evidence="1">Ribosomal protein uL3 glutamine methyltransferase</fullName>
        <shortName evidence="1">uL3 MTase</shortName>
        <ecNumber evidence="1">2.1.1.298</ecNumber>
    </recommendedName>
    <alternativeName>
        <fullName evidence="1">N5-glutamine methyltransferase PrmB</fullName>
    </alternativeName>
</protein>
<sequence length="312" mass="34101">MAVAMTPAAADELHTIVDLIRYGASRFSEAGLTFGHSYDNALDEATQLVLHALHLPPDLGPAYGQARLLHTEKECVLALFERRVTERVPVAYLTGDAWFAGLNFKSDARALVPRSPIAELIQAGFEPWLAGRDVRHALDLCTGSGCIAIAMGHYNPHWSVDGADISEDALSLALENKVRLLAHNVELIKSDVFAGLVGRRYQLIVSNPPYVTDAETDALPQEYGYEPELGLRAGPDGLNLVLKILRDAPAHLDEEGLLICEVGESEQQLVRLLPQVDFAWVEFKVGQMGVFAVECRELIAHHDPIAALAAER</sequence>
<name>PRMB_XYLFA</name>
<gene>
    <name evidence="1" type="primary">prmB</name>
    <name type="ordered locus">XF_1368</name>
</gene>
<organism>
    <name type="scientific">Xylella fastidiosa (strain 9a5c)</name>
    <dbReference type="NCBI Taxonomy" id="160492"/>
    <lineage>
        <taxon>Bacteria</taxon>
        <taxon>Pseudomonadati</taxon>
        <taxon>Pseudomonadota</taxon>
        <taxon>Gammaproteobacteria</taxon>
        <taxon>Lysobacterales</taxon>
        <taxon>Lysobacteraceae</taxon>
        <taxon>Xylella</taxon>
    </lineage>
</organism>
<proteinExistence type="inferred from homology"/>
<dbReference type="EC" id="2.1.1.298" evidence="1"/>
<dbReference type="EMBL" id="AE003849">
    <property type="protein sequence ID" value="AAF84177.1"/>
    <property type="molecule type" value="Genomic_DNA"/>
</dbReference>
<dbReference type="PIR" id="D82690">
    <property type="entry name" value="D82690"/>
</dbReference>
<dbReference type="SMR" id="Q9PDL1"/>
<dbReference type="STRING" id="160492.XF_1368"/>
<dbReference type="KEGG" id="xfa:XF_1368"/>
<dbReference type="eggNOG" id="COG2890">
    <property type="taxonomic scope" value="Bacteria"/>
</dbReference>
<dbReference type="HOGENOM" id="CLU_018398_5_1_6"/>
<dbReference type="Proteomes" id="UP000000812">
    <property type="component" value="Chromosome"/>
</dbReference>
<dbReference type="GO" id="GO:0005829">
    <property type="term" value="C:cytosol"/>
    <property type="evidence" value="ECO:0007669"/>
    <property type="project" value="TreeGrafter"/>
</dbReference>
<dbReference type="GO" id="GO:0003676">
    <property type="term" value="F:nucleic acid binding"/>
    <property type="evidence" value="ECO:0007669"/>
    <property type="project" value="InterPro"/>
</dbReference>
<dbReference type="GO" id="GO:0036009">
    <property type="term" value="F:protein-glutamine N-methyltransferase activity"/>
    <property type="evidence" value="ECO:0007669"/>
    <property type="project" value="UniProtKB-UniRule"/>
</dbReference>
<dbReference type="GO" id="GO:0032259">
    <property type="term" value="P:methylation"/>
    <property type="evidence" value="ECO:0007669"/>
    <property type="project" value="UniProtKB-KW"/>
</dbReference>
<dbReference type="CDD" id="cd02440">
    <property type="entry name" value="AdoMet_MTases"/>
    <property type="match status" value="1"/>
</dbReference>
<dbReference type="Gene3D" id="1.10.8.10">
    <property type="entry name" value="DNA helicase RuvA subunit, C-terminal domain"/>
    <property type="match status" value="1"/>
</dbReference>
<dbReference type="Gene3D" id="3.40.50.150">
    <property type="entry name" value="Vaccinia Virus protein VP39"/>
    <property type="match status" value="1"/>
</dbReference>
<dbReference type="HAMAP" id="MF_02125">
    <property type="entry name" value="L3_methyltr_PrmB"/>
    <property type="match status" value="1"/>
</dbReference>
<dbReference type="InterPro" id="IPR002052">
    <property type="entry name" value="DNA_methylase_N6_adenine_CS"/>
</dbReference>
<dbReference type="InterPro" id="IPR004556">
    <property type="entry name" value="HemK-like"/>
</dbReference>
<dbReference type="InterPro" id="IPR017127">
    <property type="entry name" value="Ribosome_uL3_MTase"/>
</dbReference>
<dbReference type="InterPro" id="IPR029063">
    <property type="entry name" value="SAM-dependent_MTases_sf"/>
</dbReference>
<dbReference type="InterPro" id="IPR007848">
    <property type="entry name" value="Small_mtfrase_dom"/>
</dbReference>
<dbReference type="NCBIfam" id="TIGR00536">
    <property type="entry name" value="hemK_fam"/>
    <property type="match status" value="1"/>
</dbReference>
<dbReference type="NCBIfam" id="TIGR03533">
    <property type="entry name" value="L3_gln_methyl"/>
    <property type="match status" value="1"/>
</dbReference>
<dbReference type="PANTHER" id="PTHR47806">
    <property type="entry name" value="50S RIBOSOMAL PROTEIN L3 GLUTAMINE METHYLTRANSFERASE"/>
    <property type="match status" value="1"/>
</dbReference>
<dbReference type="PANTHER" id="PTHR47806:SF1">
    <property type="entry name" value="RIBOSOMAL PROTEIN UL3 GLUTAMINE METHYLTRANSFERASE"/>
    <property type="match status" value="1"/>
</dbReference>
<dbReference type="Pfam" id="PF05175">
    <property type="entry name" value="MTS"/>
    <property type="match status" value="1"/>
</dbReference>
<dbReference type="PIRSF" id="PIRSF037167">
    <property type="entry name" value="Mtase_YfcB_prd"/>
    <property type="match status" value="1"/>
</dbReference>
<dbReference type="SUPFAM" id="SSF53335">
    <property type="entry name" value="S-adenosyl-L-methionine-dependent methyltransferases"/>
    <property type="match status" value="1"/>
</dbReference>
<accession>Q9PDL1</accession>
<feature type="chain" id="PRO_0000088013" description="Ribosomal protein uL3 glutamine methyltransferase">
    <location>
        <begin position="1"/>
        <end position="312"/>
    </location>
</feature>
<keyword id="KW-0489">Methyltransferase</keyword>
<keyword id="KW-0949">S-adenosyl-L-methionine</keyword>
<keyword id="KW-0808">Transferase</keyword>
<reference key="1">
    <citation type="journal article" date="2000" name="Nature">
        <title>The genome sequence of the plant pathogen Xylella fastidiosa.</title>
        <authorList>
            <person name="Simpson A.J.G."/>
            <person name="Reinach F.C."/>
            <person name="Arruda P."/>
            <person name="Abreu F.A."/>
            <person name="Acencio M."/>
            <person name="Alvarenga R."/>
            <person name="Alves L.M.C."/>
            <person name="Araya J.E."/>
            <person name="Baia G.S."/>
            <person name="Baptista C.S."/>
            <person name="Barros M.H."/>
            <person name="Bonaccorsi E.D."/>
            <person name="Bordin S."/>
            <person name="Bove J.M."/>
            <person name="Briones M.R.S."/>
            <person name="Bueno M.R.P."/>
            <person name="Camargo A.A."/>
            <person name="Camargo L.E.A."/>
            <person name="Carraro D.M."/>
            <person name="Carrer H."/>
            <person name="Colauto N.B."/>
            <person name="Colombo C."/>
            <person name="Costa F.F."/>
            <person name="Costa M.C.R."/>
            <person name="Costa-Neto C.M."/>
            <person name="Coutinho L.L."/>
            <person name="Cristofani M."/>
            <person name="Dias-Neto E."/>
            <person name="Docena C."/>
            <person name="El-Dorry H."/>
            <person name="Facincani A.P."/>
            <person name="Ferreira A.J.S."/>
            <person name="Ferreira V.C.A."/>
            <person name="Ferro J.A."/>
            <person name="Fraga J.S."/>
            <person name="Franca S.C."/>
            <person name="Franco M.C."/>
            <person name="Frohme M."/>
            <person name="Furlan L.R."/>
            <person name="Garnier M."/>
            <person name="Goldman G.H."/>
            <person name="Goldman M.H.S."/>
            <person name="Gomes S.L."/>
            <person name="Gruber A."/>
            <person name="Ho P.L."/>
            <person name="Hoheisel J.D."/>
            <person name="Junqueira M.L."/>
            <person name="Kemper E.L."/>
            <person name="Kitajima J.P."/>
            <person name="Krieger J.E."/>
            <person name="Kuramae E.E."/>
            <person name="Laigret F."/>
            <person name="Lambais M.R."/>
            <person name="Leite L.C.C."/>
            <person name="Lemos E.G.M."/>
            <person name="Lemos M.V.F."/>
            <person name="Lopes S.A."/>
            <person name="Lopes C.R."/>
            <person name="Machado J.A."/>
            <person name="Machado M.A."/>
            <person name="Madeira A.M.B.N."/>
            <person name="Madeira H.M.F."/>
            <person name="Marino C.L."/>
            <person name="Marques M.V."/>
            <person name="Martins E.A.L."/>
            <person name="Martins E.M.F."/>
            <person name="Matsukuma A.Y."/>
            <person name="Menck C.F.M."/>
            <person name="Miracca E.C."/>
            <person name="Miyaki C.Y."/>
            <person name="Monteiro-Vitorello C.B."/>
            <person name="Moon D.H."/>
            <person name="Nagai M.A."/>
            <person name="Nascimento A.L.T.O."/>
            <person name="Netto L.E.S."/>
            <person name="Nhani A. Jr."/>
            <person name="Nobrega F.G."/>
            <person name="Nunes L.R."/>
            <person name="Oliveira M.A."/>
            <person name="de Oliveira M.C."/>
            <person name="de Oliveira R.C."/>
            <person name="Palmieri D.A."/>
            <person name="Paris A."/>
            <person name="Peixoto B.R."/>
            <person name="Pereira G.A.G."/>
            <person name="Pereira H.A. Jr."/>
            <person name="Pesquero J.B."/>
            <person name="Quaggio R.B."/>
            <person name="Roberto P.G."/>
            <person name="Rodrigues V."/>
            <person name="de Rosa A.J.M."/>
            <person name="de Rosa V.E. Jr."/>
            <person name="de Sa R.G."/>
            <person name="Santelli R.V."/>
            <person name="Sawasaki H.E."/>
            <person name="da Silva A.C.R."/>
            <person name="da Silva A.M."/>
            <person name="da Silva F.R."/>
            <person name="Silva W.A. Jr."/>
            <person name="da Silveira J.F."/>
            <person name="Silvestri M.L.Z."/>
            <person name="Siqueira W.J."/>
            <person name="de Souza A.A."/>
            <person name="de Souza A.P."/>
            <person name="Terenzi M.F."/>
            <person name="Truffi D."/>
            <person name="Tsai S.M."/>
            <person name="Tsuhako M.H."/>
            <person name="Vallada H."/>
            <person name="Van Sluys M.A."/>
            <person name="Verjovski-Almeida S."/>
            <person name="Vettore A.L."/>
            <person name="Zago M.A."/>
            <person name="Zatz M."/>
            <person name="Meidanis J."/>
            <person name="Setubal J.C."/>
        </authorList>
    </citation>
    <scope>NUCLEOTIDE SEQUENCE [LARGE SCALE GENOMIC DNA]</scope>
    <source>
        <strain>9a5c</strain>
    </source>
</reference>
<evidence type="ECO:0000255" key="1">
    <source>
        <dbReference type="HAMAP-Rule" id="MF_02125"/>
    </source>
</evidence>